<comment type="subcellular location">
    <subcellularLocation>
        <location evidence="1">Cell inner membrane</location>
        <topology evidence="1">Single-pass membrane protein</topology>
    </subcellularLocation>
</comment>
<comment type="similarity">
    <text evidence="1">Belongs to the UPF0387 family.</text>
</comment>
<keyword id="KW-0997">Cell inner membrane</keyword>
<keyword id="KW-1003">Cell membrane</keyword>
<keyword id="KW-0472">Membrane</keyword>
<keyword id="KW-1185">Reference proteome</keyword>
<keyword id="KW-0812">Transmembrane</keyword>
<keyword id="KW-1133">Transmembrane helix</keyword>
<protein>
    <recommendedName>
        <fullName evidence="1">UPF0387 membrane protein YohO</fullName>
    </recommendedName>
</protein>
<proteinExistence type="inferred from homology"/>
<reference key="1">
    <citation type="journal article" date="2002" name="Proc. Natl. Acad. Sci. U.S.A.">
        <title>Extensive mosaic structure revealed by the complete genome sequence of uropathogenic Escherichia coli.</title>
        <authorList>
            <person name="Welch R.A."/>
            <person name="Burland V."/>
            <person name="Plunkett G. III"/>
            <person name="Redford P."/>
            <person name="Roesch P."/>
            <person name="Rasko D."/>
            <person name="Buckles E.L."/>
            <person name="Liou S.-R."/>
            <person name="Boutin A."/>
            <person name="Hackett J."/>
            <person name="Stroud D."/>
            <person name="Mayhew G.F."/>
            <person name="Rose D.J."/>
            <person name="Zhou S."/>
            <person name="Schwartz D.C."/>
            <person name="Perna N.T."/>
            <person name="Mobley H.L.T."/>
            <person name="Donnenberg M.S."/>
            <person name="Blattner F.R."/>
        </authorList>
    </citation>
    <scope>NUCLEOTIDE SEQUENCE [LARGE SCALE GENOMIC DNA]</scope>
    <source>
        <strain>CFT073 / ATCC 700928 / UPEC</strain>
    </source>
</reference>
<evidence type="ECO:0000255" key="1">
    <source>
        <dbReference type="HAMAP-Rule" id="MF_01362"/>
    </source>
</evidence>
<dbReference type="EMBL" id="AE014075">
    <property type="status" value="NOT_ANNOTATED_CDS"/>
    <property type="molecule type" value="Genomic_DNA"/>
</dbReference>
<dbReference type="RefSeq" id="WP_001216963.1">
    <property type="nucleotide sequence ID" value="NZ_CP051263.1"/>
</dbReference>
<dbReference type="Proteomes" id="UP000001410">
    <property type="component" value="Chromosome"/>
</dbReference>
<dbReference type="GO" id="GO:0005886">
    <property type="term" value="C:plasma membrane"/>
    <property type="evidence" value="ECO:0007669"/>
    <property type="project" value="UniProtKB-SubCell"/>
</dbReference>
<dbReference type="HAMAP" id="MF_01362">
    <property type="entry name" value="UPF0387"/>
    <property type="match status" value="1"/>
</dbReference>
<dbReference type="InterPro" id="IPR020870">
    <property type="entry name" value="UPF0387_membrane"/>
</dbReference>
<dbReference type="NCBIfam" id="NF010225">
    <property type="entry name" value="PRK13681.1"/>
    <property type="match status" value="1"/>
</dbReference>
<accession>P0C1Y7</accession>
<name>YOHO_ECOL6</name>
<gene>
    <name evidence="1" type="primary">yohO</name>
    <name type="ordered locus">c2657.1</name>
</gene>
<sequence length="35" mass="3643">MRIAKIGVIALFLFMALGGIGGVMLAGYTFILRAG</sequence>
<organism>
    <name type="scientific">Escherichia coli O6:H1 (strain CFT073 / ATCC 700928 / UPEC)</name>
    <dbReference type="NCBI Taxonomy" id="199310"/>
    <lineage>
        <taxon>Bacteria</taxon>
        <taxon>Pseudomonadati</taxon>
        <taxon>Pseudomonadota</taxon>
        <taxon>Gammaproteobacteria</taxon>
        <taxon>Enterobacterales</taxon>
        <taxon>Enterobacteriaceae</taxon>
        <taxon>Escherichia</taxon>
    </lineage>
</organism>
<feature type="chain" id="PRO_0000252195" description="UPF0387 membrane protein YohO">
    <location>
        <begin position="1"/>
        <end position="35"/>
    </location>
</feature>
<feature type="transmembrane region" description="Helical" evidence="1">
    <location>
        <begin position="6"/>
        <end position="26"/>
    </location>
</feature>